<accession>P20332</accession>
<proteinExistence type="evidence at transcript level"/>
<feature type="signal peptide" evidence="1">
    <location>
        <begin position="1"/>
        <end position="22"/>
    </location>
</feature>
<feature type="chain" id="PRO_0000033037" description="Somatotropin-2">
    <location>
        <begin position="23"/>
        <end position="210"/>
    </location>
</feature>
<feature type="binding site" evidence="1">
    <location>
        <position position="38"/>
    </location>
    <ligand>
        <name>Zn(2+)</name>
        <dbReference type="ChEBI" id="CHEBI:29105"/>
    </ligand>
</feature>
<feature type="binding site" evidence="1">
    <location>
        <position position="192"/>
    </location>
    <ligand>
        <name>Zn(2+)</name>
        <dbReference type="ChEBI" id="CHEBI:29105"/>
    </ligand>
</feature>
<feature type="disulfide bond" evidence="1">
    <location>
        <begin position="71"/>
        <end position="183"/>
    </location>
</feature>
<feature type="disulfide bond" evidence="1">
    <location>
        <begin position="200"/>
        <end position="208"/>
    </location>
</feature>
<feature type="sequence conflict" description="In Ref. 3; AAA49554." evidence="2" ref="3">
    <original>T</original>
    <variation>I</variation>
    <location>
        <position position="112"/>
    </location>
</feature>
<feature type="sequence conflict" description="In Ref. 3; AAA49554." evidence="2" ref="3">
    <original>GV</original>
    <variation>LA</variation>
    <location>
        <begin position="146"/>
        <end position="147"/>
    </location>
</feature>
<feature type="sequence conflict" description="In Ref. 3; AAA49554." evidence="2" ref="3">
    <original>Y</original>
    <variation>S</variation>
    <location>
        <position position="203"/>
    </location>
</feature>
<gene>
    <name type="primary">gh2</name>
</gene>
<comment type="function">
    <text>Growth hormone plays an important role in growth control and is involved in the regulation of several anabolic processes. Implicated as an osmoregulatory substance important for seawater adaptation.</text>
</comment>
<comment type="subcellular location">
    <subcellularLocation>
        <location>Secreted</location>
    </subcellularLocation>
</comment>
<comment type="similarity">
    <text evidence="2">Belongs to the somatotropin/prolactin family.</text>
</comment>
<name>SOMA2_ONCMY</name>
<dbReference type="EMBL" id="M22732">
    <property type="protein sequence ID" value="AAA49557.1"/>
    <property type="molecule type" value="mRNA"/>
</dbReference>
<dbReference type="EMBL" id="J03797">
    <property type="protein sequence ID" value="AAA49556.1"/>
    <property type="molecule type" value="Genomic_DNA"/>
</dbReference>
<dbReference type="EMBL" id="M24684">
    <property type="protein sequence ID" value="AAA49554.1"/>
    <property type="molecule type" value="mRNA"/>
</dbReference>
<dbReference type="PIR" id="I51340">
    <property type="entry name" value="I51340"/>
</dbReference>
<dbReference type="RefSeq" id="NP_001118162.1">
    <property type="nucleotide sequence ID" value="NM_001124690.1"/>
</dbReference>
<dbReference type="SMR" id="P20332"/>
<dbReference type="GeneID" id="100136734"/>
<dbReference type="KEGG" id="omy:100136734"/>
<dbReference type="CTD" id="2689"/>
<dbReference type="OrthoDB" id="9925773at2759"/>
<dbReference type="SABIO-RK" id="P20332"/>
<dbReference type="Proteomes" id="UP000694395">
    <property type="component" value="Unplaced"/>
</dbReference>
<dbReference type="GO" id="GO:0005829">
    <property type="term" value="C:cytosol"/>
    <property type="evidence" value="ECO:0000314"/>
    <property type="project" value="AgBase"/>
</dbReference>
<dbReference type="GO" id="GO:0005615">
    <property type="term" value="C:extracellular space"/>
    <property type="evidence" value="ECO:0000314"/>
    <property type="project" value="AgBase"/>
</dbReference>
<dbReference type="GO" id="GO:0070186">
    <property type="term" value="F:growth hormone activity"/>
    <property type="evidence" value="ECO:0007669"/>
    <property type="project" value="TreeGrafter"/>
</dbReference>
<dbReference type="GO" id="GO:0005131">
    <property type="term" value="F:growth hormone receptor binding"/>
    <property type="evidence" value="ECO:0000314"/>
    <property type="project" value="AgBase"/>
</dbReference>
<dbReference type="GO" id="GO:0046872">
    <property type="term" value="F:metal ion binding"/>
    <property type="evidence" value="ECO:0007669"/>
    <property type="project" value="UniProtKB-KW"/>
</dbReference>
<dbReference type="GO" id="GO:0048513">
    <property type="term" value="P:animal organ development"/>
    <property type="evidence" value="ECO:0007669"/>
    <property type="project" value="TreeGrafter"/>
</dbReference>
<dbReference type="GO" id="GO:0055074">
    <property type="term" value="P:calcium ion homeostasis"/>
    <property type="evidence" value="ECO:0000250"/>
    <property type="project" value="AgBase"/>
</dbReference>
<dbReference type="GO" id="GO:0055064">
    <property type="term" value="P:chloride ion homeostasis"/>
    <property type="evidence" value="ECO:0000314"/>
    <property type="project" value="AgBase"/>
</dbReference>
<dbReference type="GO" id="GO:0060396">
    <property type="term" value="P:growth hormone receptor signaling pathway"/>
    <property type="evidence" value="ECO:0007669"/>
    <property type="project" value="TreeGrafter"/>
</dbReference>
<dbReference type="GO" id="GO:0042538">
    <property type="term" value="P:hyperosmotic salinity response"/>
    <property type="evidence" value="ECO:0000314"/>
    <property type="project" value="AgBase"/>
</dbReference>
<dbReference type="GO" id="GO:0010960">
    <property type="term" value="P:magnesium ion homeostasis"/>
    <property type="evidence" value="ECO:0000250"/>
    <property type="project" value="AgBase"/>
</dbReference>
<dbReference type="GO" id="GO:2000844">
    <property type="term" value="P:negative regulation of testosterone secretion"/>
    <property type="evidence" value="ECO:0000250"/>
    <property type="project" value="AgBase"/>
</dbReference>
<dbReference type="GO" id="GO:0010628">
    <property type="term" value="P:positive regulation of gene expression"/>
    <property type="evidence" value="ECO:0000315"/>
    <property type="project" value="AgBase"/>
</dbReference>
<dbReference type="GO" id="GO:0045927">
    <property type="term" value="P:positive regulation of growth"/>
    <property type="evidence" value="ECO:0007669"/>
    <property type="project" value="TreeGrafter"/>
</dbReference>
<dbReference type="GO" id="GO:2000376">
    <property type="term" value="P:positive regulation of oxygen metabolic process"/>
    <property type="evidence" value="ECO:0000314"/>
    <property type="project" value="AgBase"/>
</dbReference>
<dbReference type="GO" id="GO:1903408">
    <property type="term" value="P:positive regulation of P-type sodium:potassium-exchanging transporter activity"/>
    <property type="evidence" value="ECO:0000314"/>
    <property type="project" value="AgBase"/>
</dbReference>
<dbReference type="GO" id="GO:0050766">
    <property type="term" value="P:positive regulation of phagocytosis"/>
    <property type="evidence" value="ECO:0000250"/>
    <property type="project" value="AgBase"/>
</dbReference>
<dbReference type="GO" id="GO:0046427">
    <property type="term" value="P:positive regulation of receptor signaling pathway via JAK-STAT"/>
    <property type="evidence" value="ECO:0007669"/>
    <property type="project" value="TreeGrafter"/>
</dbReference>
<dbReference type="GO" id="GO:2000833">
    <property type="term" value="P:positive regulation of steroid hormone secretion"/>
    <property type="evidence" value="ECO:0000250"/>
    <property type="project" value="AgBase"/>
</dbReference>
<dbReference type="GO" id="GO:0032930">
    <property type="term" value="P:positive regulation of superoxide anion generation"/>
    <property type="evidence" value="ECO:0000250"/>
    <property type="project" value="AgBase"/>
</dbReference>
<dbReference type="GO" id="GO:1901671">
    <property type="term" value="P:positive regulation of superoxide dismutase activity"/>
    <property type="evidence" value="ECO:0000315"/>
    <property type="project" value="AgBase"/>
</dbReference>
<dbReference type="GO" id="GO:0009306">
    <property type="term" value="P:protein secretion"/>
    <property type="evidence" value="ECO:0000314"/>
    <property type="project" value="AgBase"/>
</dbReference>
<dbReference type="GO" id="GO:0002637">
    <property type="term" value="P:regulation of immunoglobulin production"/>
    <property type="evidence" value="ECO:0000250"/>
    <property type="project" value="AgBase"/>
</dbReference>
<dbReference type="GO" id="GO:1903350">
    <property type="term" value="P:response to dopamine"/>
    <property type="evidence" value="ECO:0000314"/>
    <property type="project" value="AgBase"/>
</dbReference>
<dbReference type="GO" id="GO:0043207">
    <property type="term" value="P:response to external biotic stimulus"/>
    <property type="evidence" value="ECO:0000314"/>
    <property type="project" value="AgBase"/>
</dbReference>
<dbReference type="GO" id="GO:0032094">
    <property type="term" value="P:response to food"/>
    <property type="evidence" value="ECO:0000314"/>
    <property type="project" value="AgBase"/>
</dbReference>
<dbReference type="GO" id="GO:0009749">
    <property type="term" value="P:response to glucose"/>
    <property type="evidence" value="ECO:0000314"/>
    <property type="project" value="AgBase"/>
</dbReference>
<dbReference type="GO" id="GO:0060416">
    <property type="term" value="P:response to growth hormone"/>
    <property type="evidence" value="ECO:0000314"/>
    <property type="project" value="AgBase"/>
</dbReference>
<dbReference type="GO" id="GO:0042594">
    <property type="term" value="P:response to starvation"/>
    <property type="evidence" value="ECO:0000314"/>
    <property type="project" value="AgBase"/>
</dbReference>
<dbReference type="GO" id="GO:0009266">
    <property type="term" value="P:response to temperature stimulus"/>
    <property type="evidence" value="ECO:0000314"/>
    <property type="project" value="AgBase"/>
</dbReference>
<dbReference type="GO" id="GO:0055078">
    <property type="term" value="P:sodium ion homeostasis"/>
    <property type="evidence" value="ECO:0000314"/>
    <property type="project" value="AgBase"/>
</dbReference>
<dbReference type="CDD" id="cd10285">
    <property type="entry name" value="somatotropin_like"/>
    <property type="match status" value="1"/>
</dbReference>
<dbReference type="FunFam" id="1.20.1250.10:FF:000009">
    <property type="entry name" value="Growth hormone"/>
    <property type="match status" value="1"/>
</dbReference>
<dbReference type="Gene3D" id="1.20.1250.10">
    <property type="match status" value="1"/>
</dbReference>
<dbReference type="InterPro" id="IPR009079">
    <property type="entry name" value="4_helix_cytokine-like_core"/>
</dbReference>
<dbReference type="InterPro" id="IPR034975">
    <property type="entry name" value="Somatotropin"/>
</dbReference>
<dbReference type="InterPro" id="IPR001400">
    <property type="entry name" value="Somatotropin/Prolactin"/>
</dbReference>
<dbReference type="InterPro" id="IPR018116">
    <property type="entry name" value="Somatotropin_CS"/>
</dbReference>
<dbReference type="PANTHER" id="PTHR11417:SF2">
    <property type="entry name" value="SOMATOTROPIN"/>
    <property type="match status" value="1"/>
</dbReference>
<dbReference type="PANTHER" id="PTHR11417">
    <property type="entry name" value="SOMATOTROPIN,PROLACTIN"/>
    <property type="match status" value="1"/>
</dbReference>
<dbReference type="Pfam" id="PF00103">
    <property type="entry name" value="Hormone_1"/>
    <property type="match status" value="1"/>
</dbReference>
<dbReference type="PRINTS" id="PR00836">
    <property type="entry name" value="SOMATOTROPIN"/>
</dbReference>
<dbReference type="SUPFAM" id="SSF47266">
    <property type="entry name" value="4-helical cytokines"/>
    <property type="match status" value="1"/>
</dbReference>
<dbReference type="PROSITE" id="PS00266">
    <property type="entry name" value="SOMATOTROPIN_1"/>
    <property type="match status" value="1"/>
</dbReference>
<dbReference type="PROSITE" id="PS00338">
    <property type="entry name" value="SOMATOTROPIN_2"/>
    <property type="match status" value="1"/>
</dbReference>
<evidence type="ECO:0000250" key="1"/>
<evidence type="ECO:0000305" key="2"/>
<reference key="1">
    <citation type="journal article" date="1988" name="Mol. Reprod. Dev.">
        <title>Rainbow trout has two genes for growth hormone.</title>
        <authorList>
            <person name="Agellon L.B."/>
            <person name="Davies S.L."/>
            <person name="Lin C.M."/>
            <person name="Chen T.T."/>
            <person name="Powers D.A."/>
        </authorList>
    </citation>
    <scope>NUCLEOTIDE SEQUENCE [MRNA]</scope>
</reference>
<reference key="2">
    <citation type="journal article" date="1988" name="Proc. Natl. Acad. Sci. U.S.A.">
        <title>Structure of a fish (rainbow trout) growth hormone gene and its evolutionary implications.</title>
        <authorList>
            <person name="Agellon L.B."/>
            <person name="Davies S.L."/>
            <person name="Chen T.T."/>
            <person name="Powers D.A."/>
        </authorList>
    </citation>
    <scope>NUCLEOTIDE SEQUENCE [GENOMIC DNA]</scope>
</reference>
<reference key="3">
    <citation type="journal article" date="1989" name="DNA">
        <title>Molecular cloning and characterization of two forms of trout growth hormone cDNA: expression and secretion of tGH-II by Escherichia coli.</title>
        <authorList>
            <person name="Rentier-Delrue F."/>
            <person name="Swennen D."/>
            <person name="Mercier L."/>
            <person name="Lion M."/>
            <person name="Benrubi O."/>
            <person name="Martial J.A."/>
        </authorList>
    </citation>
    <scope>NUCLEOTIDE SEQUENCE [MRNA]</scope>
</reference>
<sequence length="210" mass="23946">MGQVFLLMPVLLVSCFLGQGAAMENQRLFNIAVNRVQHLHLLAQKMFNDFEGTLLPDERRQLNKIFLLDFCNSDSIVSPIDKQETQKSSVLKLLHISFRLIESWEYPSQTLTISNSLMVRNSNQISEKLSDLKVGINLLIKGSQDGVLSLDDNDSQHLPPYGNYYQNLGGDGNVRRNYELLACFKKDMHKVETYLTVAKCRKYLEANCTL</sequence>
<protein>
    <recommendedName>
        <fullName>Somatotropin-2</fullName>
    </recommendedName>
    <alternativeName>
        <fullName>Growth hormone 2</fullName>
    </alternativeName>
</protein>
<keyword id="KW-1015">Disulfide bond</keyword>
<keyword id="KW-0372">Hormone</keyword>
<keyword id="KW-0479">Metal-binding</keyword>
<keyword id="KW-0964">Secreted</keyword>
<keyword id="KW-0732">Signal</keyword>
<keyword id="KW-0862">Zinc</keyword>
<organism>
    <name type="scientific">Oncorhynchus mykiss</name>
    <name type="common">Rainbow trout</name>
    <name type="synonym">Salmo gairdneri</name>
    <dbReference type="NCBI Taxonomy" id="8022"/>
    <lineage>
        <taxon>Eukaryota</taxon>
        <taxon>Metazoa</taxon>
        <taxon>Chordata</taxon>
        <taxon>Craniata</taxon>
        <taxon>Vertebrata</taxon>
        <taxon>Euteleostomi</taxon>
        <taxon>Actinopterygii</taxon>
        <taxon>Neopterygii</taxon>
        <taxon>Teleostei</taxon>
        <taxon>Protacanthopterygii</taxon>
        <taxon>Salmoniformes</taxon>
        <taxon>Salmonidae</taxon>
        <taxon>Salmoninae</taxon>
        <taxon>Oncorhynchus</taxon>
    </lineage>
</organism>